<evidence type="ECO:0000250" key="1"/>
<evidence type="ECO:0000255" key="2"/>
<evidence type="ECO:0000256" key="3">
    <source>
        <dbReference type="SAM" id="MobiDB-lite"/>
    </source>
</evidence>
<evidence type="ECO:0000269" key="4">
    <source>
    </source>
</evidence>
<evidence type="ECO:0000269" key="5">
    <source>
    </source>
</evidence>
<evidence type="ECO:0000269" key="6">
    <source>
    </source>
</evidence>
<evidence type="ECO:0000269" key="7">
    <source>
    </source>
</evidence>
<evidence type="ECO:0000269" key="8">
    <source>
    </source>
</evidence>
<evidence type="ECO:0000269" key="9">
    <source>
    </source>
</evidence>
<evidence type="ECO:0000269" key="10">
    <source>
    </source>
</evidence>
<evidence type="ECO:0000269" key="11">
    <source>
    </source>
</evidence>
<evidence type="ECO:0000269" key="12">
    <source>
    </source>
</evidence>
<evidence type="ECO:0000269" key="13">
    <source>
    </source>
</evidence>
<evidence type="ECO:0000269" key="14">
    <source>
    </source>
</evidence>
<evidence type="ECO:0000269" key="15">
    <source>
    </source>
</evidence>
<evidence type="ECO:0000269" key="16">
    <source ref="6"/>
</evidence>
<evidence type="ECO:0000269" key="17">
    <source ref="7"/>
</evidence>
<evidence type="ECO:0000303" key="18">
    <source>
    </source>
</evidence>
<evidence type="ECO:0000303" key="19">
    <source>
    </source>
</evidence>
<evidence type="ECO:0000303" key="20">
    <source>
    </source>
</evidence>
<evidence type="ECO:0000303" key="21">
    <source>
    </source>
</evidence>
<evidence type="ECO:0000303" key="22">
    <source ref="6"/>
</evidence>
<evidence type="ECO:0000305" key="23"/>
<evidence type="ECO:0000312" key="24">
    <source>
        <dbReference type="HGNC" id="HGNC:6332"/>
    </source>
</evidence>
<evidence type="ECO:0007829" key="25">
    <source>
        <dbReference type="PDB" id="3WYR"/>
    </source>
</evidence>
<dbReference type="EMBL" id="U71199">
    <property type="protein sequence ID" value="AAB49756.1"/>
    <property type="molecule type" value="mRNA"/>
</dbReference>
<dbReference type="EMBL" id="AF034771">
    <property type="protein sequence ID" value="AAB95164.1"/>
    <property type="molecule type" value="mRNA"/>
</dbReference>
<dbReference type="EMBL" id="AF034772">
    <property type="protein sequence ID" value="AAB95165.1"/>
    <property type="molecule type" value="mRNA"/>
</dbReference>
<dbReference type="EMBL" id="AF034773">
    <property type="protein sequence ID" value="AAB95166.1"/>
    <property type="molecule type" value="mRNA"/>
</dbReference>
<dbReference type="EMBL" id="U73394">
    <property type="protein sequence ID" value="AAC51146.1"/>
    <property type="molecule type" value="mRNA"/>
</dbReference>
<dbReference type="EMBL" id="AF003123">
    <property type="protein sequence ID" value="AAB61926.1"/>
    <property type="molecule type" value="Genomic_DNA"/>
</dbReference>
<dbReference type="EMBL" id="AF003116">
    <property type="protein sequence ID" value="AAB61926.1"/>
    <property type="status" value="JOINED"/>
    <property type="molecule type" value="Genomic_DNA"/>
</dbReference>
<dbReference type="EMBL" id="AF003117">
    <property type="protein sequence ID" value="AAB61926.1"/>
    <property type="status" value="JOINED"/>
    <property type="molecule type" value="Genomic_DNA"/>
</dbReference>
<dbReference type="EMBL" id="AF003118">
    <property type="protein sequence ID" value="AAB61926.1"/>
    <property type="status" value="JOINED"/>
    <property type="molecule type" value="Genomic_DNA"/>
</dbReference>
<dbReference type="EMBL" id="AF003119">
    <property type="protein sequence ID" value="AAB61926.1"/>
    <property type="status" value="JOINED"/>
    <property type="molecule type" value="Genomic_DNA"/>
</dbReference>
<dbReference type="EMBL" id="AF003121">
    <property type="protein sequence ID" value="AAB61926.1"/>
    <property type="status" value="JOINED"/>
    <property type="molecule type" value="Genomic_DNA"/>
</dbReference>
<dbReference type="EMBL" id="AF003122">
    <property type="protein sequence ID" value="AAB61926.1"/>
    <property type="status" value="JOINED"/>
    <property type="molecule type" value="Genomic_DNA"/>
</dbReference>
<dbReference type="EMBL" id="AF003120">
    <property type="protein sequence ID" value="AAB61926.1"/>
    <property type="status" value="JOINED"/>
    <property type="molecule type" value="Genomic_DNA"/>
</dbReference>
<dbReference type="EMBL" id="AF002979">
    <property type="protein sequence ID" value="AAB71387.1"/>
    <property type="molecule type" value="mRNA"/>
</dbReference>
<dbReference type="EMBL" id="AF002980">
    <property type="protein sequence ID" value="AAB71388.1"/>
    <property type="molecule type" value="mRNA"/>
</dbReference>
<dbReference type="EMBL" id="AF002981">
    <property type="protein sequence ID" value="AAB71389.1"/>
    <property type="molecule type" value="mRNA"/>
</dbReference>
<dbReference type="EMBL" id="AF002982">
    <property type="protein sequence ID" value="AAB71390.1"/>
    <property type="molecule type" value="mRNA"/>
</dbReference>
<dbReference type="EMBL" id="EU194342">
    <property type="protein sequence ID" value="ABW73961.1"/>
    <property type="molecule type" value="mRNA"/>
</dbReference>
<dbReference type="EMBL" id="X97229">
    <property type="protein sequence ID" value="CAA65868.1"/>
    <property type="molecule type" value="mRNA"/>
</dbReference>
<dbReference type="EMBL" id="X99479">
    <property type="protein sequence ID" value="CAA67842.1"/>
    <property type="molecule type" value="mRNA"/>
</dbReference>
<dbReference type="EMBL" id="X99480">
    <property type="protein sequence ID" value="CAA67843.1"/>
    <property type="molecule type" value="mRNA"/>
</dbReference>
<dbReference type="EMBL" id="X99481">
    <property type="protein sequence ID" value="CAA67844.1"/>
    <property type="molecule type" value="mRNA"/>
</dbReference>
<dbReference type="EMBL" id="AF110035">
    <property type="protein sequence ID" value="AAD24763.1"/>
    <property type="molecule type" value="Genomic_DNA"/>
</dbReference>
<dbReference type="EMBL" id="AF110032">
    <property type="protein sequence ID" value="AAD24763.1"/>
    <property type="status" value="JOINED"/>
    <property type="molecule type" value="Genomic_DNA"/>
</dbReference>
<dbReference type="EMBL" id="AF110033">
    <property type="protein sequence ID" value="AAD24763.1"/>
    <property type="status" value="JOINED"/>
    <property type="molecule type" value="Genomic_DNA"/>
</dbReference>
<dbReference type="EMBL" id="AF110034">
    <property type="protein sequence ID" value="AAD24763.1"/>
    <property type="status" value="JOINED"/>
    <property type="molecule type" value="Genomic_DNA"/>
</dbReference>
<dbReference type="EMBL" id="AC011501">
    <property type="status" value="NOT_ANNOTATED_CDS"/>
    <property type="molecule type" value="Genomic_DNA"/>
</dbReference>
<dbReference type="EMBL" id="AL133414">
    <property type="status" value="NOT_ANNOTATED_CDS"/>
    <property type="molecule type" value="Genomic_DNA"/>
</dbReference>
<dbReference type="CCDS" id="CCDS42619.1">
    <molecule id="Q99706-3"/>
</dbReference>
<dbReference type="RefSeq" id="NP_001074239.1">
    <molecule id="Q99706-3"/>
    <property type="nucleotide sequence ID" value="NM_001080770.2"/>
</dbReference>
<dbReference type="RefSeq" id="NP_002246.5">
    <property type="nucleotide sequence ID" value="NM_002255.5"/>
</dbReference>
<dbReference type="PDB" id="3WYR">
    <property type="method" value="X-ray"/>
    <property type="resolution" value="2.80 A"/>
    <property type="chains" value="A/B=24-218"/>
</dbReference>
<dbReference type="PDBsum" id="3WYR"/>
<dbReference type="SMR" id="Q99706"/>
<dbReference type="BioGRID" id="110006">
    <property type="interactions" value="94"/>
</dbReference>
<dbReference type="FunCoup" id="Q99706">
    <property type="interactions" value="100"/>
</dbReference>
<dbReference type="IntAct" id="Q99706">
    <property type="interactions" value="91"/>
</dbReference>
<dbReference type="MINT" id="Q99706"/>
<dbReference type="STRING" id="9606.ENSP00000339634"/>
<dbReference type="GlyCosmos" id="Q99706">
    <property type="glycosylation" value="2 sites, No reported glycans"/>
</dbReference>
<dbReference type="GlyGen" id="Q99706">
    <property type="glycosylation" value="5 sites"/>
</dbReference>
<dbReference type="iPTMnet" id="Q99706"/>
<dbReference type="PhosphoSitePlus" id="Q99706"/>
<dbReference type="BioMuta" id="KIR2DL4"/>
<dbReference type="DMDM" id="325511396"/>
<dbReference type="MassIVE" id="Q99706"/>
<dbReference type="PaxDb" id="9606-ENSP00000339634"/>
<dbReference type="PeptideAtlas" id="Q99706"/>
<dbReference type="ProteomicsDB" id="78417">
    <molecule id="Q99706-1"/>
</dbReference>
<dbReference type="ProteomicsDB" id="78418">
    <molecule id="Q99706-2"/>
</dbReference>
<dbReference type="ProteomicsDB" id="78419">
    <molecule id="Q99706-3"/>
</dbReference>
<dbReference type="ProteomicsDB" id="78420">
    <molecule id="Q99706-4"/>
</dbReference>
<dbReference type="ProteomicsDB" id="78421">
    <molecule id="Q99706-5"/>
</dbReference>
<dbReference type="Antibodypedia" id="52730">
    <property type="antibodies" value="430 antibodies from 24 providers"/>
</dbReference>
<dbReference type="DNASU" id="3805"/>
<dbReference type="Ensembl" id="ENST00000345540.10">
    <molecule id="Q99706-3"/>
    <property type="protein sequence ID" value="ENSP00000339634.5"/>
    <property type="gene ID" value="ENSG00000189013.16"/>
</dbReference>
<dbReference type="Ensembl" id="ENST00000357494.8">
    <molecule id="Q99706-4"/>
    <property type="protein sequence ID" value="ENSP00000350088.4"/>
    <property type="gene ID" value="ENSG00000189013.16"/>
</dbReference>
<dbReference type="Ensembl" id="ENST00000396293.5">
    <molecule id="Q99706-6"/>
    <property type="protein sequence ID" value="ENSP00000379588.1"/>
    <property type="gene ID" value="ENSG00000189013.16"/>
</dbReference>
<dbReference type="Ensembl" id="ENST00000611022.4">
    <molecule id="Q99706-3"/>
    <property type="protein sequence ID" value="ENSP00000484469.1"/>
    <property type="gene ID" value="ENSG00000274232.4"/>
</dbReference>
<dbReference type="Ensembl" id="ENST00000612573.1">
    <property type="protein sequence ID" value="ENSP00000482206.1"/>
    <property type="gene ID" value="ENSG00000275456.1"/>
</dbReference>
<dbReference type="Ensembl" id="ENST00000612660.4">
    <property type="protein sequence ID" value="ENSP00000479179.1"/>
    <property type="gene ID" value="ENSG00000275317.4"/>
</dbReference>
<dbReference type="Ensembl" id="ENST00000613053.1">
    <property type="protein sequence ID" value="ENSP00000484389.1"/>
    <property type="gene ID" value="ENSG00000277362.1"/>
</dbReference>
<dbReference type="Ensembl" id="ENST00000614653.1">
    <property type="protein sequence ID" value="ENSP00000478362.1"/>
    <property type="gene ID" value="ENSG00000277750.1"/>
</dbReference>
<dbReference type="Ensembl" id="ENST00000614680.4">
    <molecule id="Q99706-3"/>
    <property type="protein sequence ID" value="ENSP00000477984.1"/>
    <property type="gene ID" value="ENSG00000273575.4"/>
</dbReference>
<dbReference type="Ensembl" id="ENST00000615232.4">
    <molecule id="Q99706-6"/>
    <property type="protein sequence ID" value="ENSP00000479874.1"/>
    <property type="gene ID" value="ENSG00000274232.4"/>
</dbReference>
<dbReference type="Ensembl" id="ENST00000615243.4">
    <molecule id="Q99706-4"/>
    <property type="protein sequence ID" value="ENSP00000482454.1"/>
    <property type="gene ID" value="ENSG00000274232.4"/>
</dbReference>
<dbReference type="Ensembl" id="ENST00000615970.1">
    <property type="protein sequence ID" value="ENSP00000477887.1"/>
    <property type="gene ID" value="ENSG00000278271.1"/>
</dbReference>
<dbReference type="Ensembl" id="ENST00000616354.4">
    <property type="protein sequence ID" value="ENSP00000483782.1"/>
    <property type="gene ID" value="ENSG00000278430.4"/>
</dbReference>
<dbReference type="Ensembl" id="ENST00000616384.4">
    <molecule id="Q99706-3"/>
    <property type="protein sequence ID" value="ENSP00000479347.1"/>
    <property type="gene ID" value="ENSG00000276044.4"/>
</dbReference>
<dbReference type="Ensembl" id="ENST00000618297.1">
    <property type="protein sequence ID" value="ENSP00000477886.1"/>
    <property type="gene ID" value="ENSG00000278074.1"/>
</dbReference>
<dbReference type="Ensembl" id="ENST00000618358.1">
    <property type="protein sequence ID" value="ENSP00000483101.1"/>
    <property type="gene ID" value="ENSG00000274609.1"/>
</dbReference>
<dbReference type="Ensembl" id="ENST00000618567.1">
    <property type="protein sequence ID" value="ENSP00000482383.1"/>
    <property type="gene ID" value="ENSG00000276779.1"/>
</dbReference>
<dbReference type="Ensembl" id="ENST00000619637.4">
    <property type="protein sequence ID" value="ENSP00000478491.1"/>
    <property type="gene ID" value="ENSG00000274955.4"/>
</dbReference>
<dbReference type="Ensembl" id="ENST00000619848.1">
    <property type="protein sequence ID" value="ENSP00000480801.1"/>
    <property type="gene ID" value="ENSG00000277964.1"/>
</dbReference>
<dbReference type="Ensembl" id="ENST00000620484.4">
    <property type="protein sequence ID" value="ENSP00000477601.1"/>
    <property type="gene ID" value="ENSG00000275317.4"/>
</dbReference>
<dbReference type="Ensembl" id="ENST00000620486.4">
    <property type="protein sequence ID" value="ENSP00000482452.1"/>
    <property type="gene ID" value="ENSG00000278430.4"/>
</dbReference>
<dbReference type="Ensembl" id="ENST00000621182.3">
    <molecule id="Q99706-3"/>
    <property type="protein sequence ID" value="ENSP00000479175.1"/>
    <property type="gene ID" value="ENSG00000275699.4"/>
</dbReference>
<dbReference type="Ensembl" id="ENST00000638231.1">
    <molecule id="Q99706-6"/>
    <property type="protein sequence ID" value="ENSP00000492368.1"/>
    <property type="gene ID" value="ENSG00000284460.1"/>
</dbReference>
<dbReference type="Ensembl" id="ENST00000638248.1">
    <molecule id="Q99706-4"/>
    <property type="protein sequence ID" value="ENSP00000491734.1"/>
    <property type="gene ID" value="ENSG00000284365.1"/>
</dbReference>
<dbReference type="Ensembl" id="ENST00000638297.1">
    <molecule id="Q99706-6"/>
    <property type="protein sequence ID" value="ENSP00000492029.1"/>
    <property type="gene ID" value="ENSG00000284365.1"/>
</dbReference>
<dbReference type="Ensembl" id="ENST00000638563.2">
    <molecule id="Q99706-4"/>
    <property type="protein sequence ID" value="ENSP00000491532.1"/>
    <property type="gene ID" value="ENSG00000284013.2"/>
</dbReference>
<dbReference type="Ensembl" id="ENST00000638897.1">
    <molecule id="Q99706-4"/>
    <property type="protein sequence ID" value="ENSP00000492653.1"/>
    <property type="gene ID" value="ENSG00000283961.1"/>
</dbReference>
<dbReference type="Ensembl" id="ENST00000639460.1">
    <molecule id="Q99706-6"/>
    <property type="protein sequence ID" value="ENSP00000491648.1"/>
    <property type="gene ID" value="ENSG00000283869.1"/>
</dbReference>
<dbReference type="Ensembl" id="ENST00000639533.1">
    <molecule id="Q99706-6"/>
    <property type="protein sequence ID" value="ENSP00000491289.1"/>
    <property type="gene ID" value="ENSG00000283961.1"/>
</dbReference>
<dbReference type="Ensembl" id="ENST00000639577.2">
    <molecule id="Q99706-3"/>
    <property type="protein sequence ID" value="ENSP00000492722.1"/>
    <property type="gene ID" value="ENSG00000284013.2"/>
</dbReference>
<dbReference type="Ensembl" id="ENST00000639740.1">
    <molecule id="Q99706-6"/>
    <property type="protein sequence ID" value="ENSP00000492606.1"/>
    <property type="gene ID" value="ENSG00000284509.1"/>
</dbReference>
<dbReference type="Ensembl" id="ENST00000639866.1">
    <molecule id="Q99706-3"/>
    <property type="protein sequence ID" value="ENSP00000491202.1"/>
    <property type="gene ID" value="ENSG00000283961.1"/>
</dbReference>
<dbReference type="Ensembl" id="ENST00000640163.2">
    <molecule id="Q99706-6"/>
    <property type="protein sequence ID" value="ENSP00000491890.2"/>
    <property type="gene ID" value="ENSG00000284013.2"/>
</dbReference>
<dbReference type="Ensembl" id="ENST00000640814.1">
    <molecule id="Q99706-3"/>
    <property type="protein sequence ID" value="ENSP00000491623.1"/>
    <property type="gene ID" value="ENSG00000284365.1"/>
</dbReference>
<dbReference type="GeneID" id="3805"/>
<dbReference type="KEGG" id="hsa:3805"/>
<dbReference type="MANE-Select" id="ENST00000345540.10">
    <molecule id="Q99706-3"/>
    <property type="protein sequence ID" value="ENSP00000339634.5"/>
    <property type="RefSeq nucleotide sequence ID" value="NM_001080770.2"/>
    <property type="RefSeq protein sequence ID" value="NP_001074239.1"/>
</dbReference>
<dbReference type="UCSC" id="uc002qhg.5">
    <molecule id="Q99706-1"/>
    <property type="organism name" value="human"/>
</dbReference>
<dbReference type="AGR" id="HGNC:6332"/>
<dbReference type="CTD" id="3805"/>
<dbReference type="DisGeNET" id="3805"/>
<dbReference type="GeneCards" id="KIR2DL4"/>
<dbReference type="HGNC" id="HGNC:6332">
    <property type="gene designation" value="KIR2DL4"/>
</dbReference>
<dbReference type="HPA" id="ENSG00000189013">
    <property type="expression patterns" value="Tissue enriched (lymphoid)"/>
</dbReference>
<dbReference type="MalaCards" id="KIR2DL4"/>
<dbReference type="MIM" id="604945">
    <property type="type" value="gene"/>
</dbReference>
<dbReference type="neXtProt" id="NX_Q99706"/>
<dbReference type="OpenTargets" id="ENSG00000189013"/>
<dbReference type="PharmGKB" id="PA30117"/>
<dbReference type="VEuPathDB" id="HostDB:ENSG00000189013"/>
<dbReference type="eggNOG" id="ENOG502RU21">
    <property type="taxonomic scope" value="Eukaryota"/>
</dbReference>
<dbReference type="GeneTree" id="ENSGT01100000263478"/>
<dbReference type="HOGENOM" id="CLU_021100_2_1_1"/>
<dbReference type="InParanoid" id="Q99706"/>
<dbReference type="OrthoDB" id="9613897at2759"/>
<dbReference type="PAN-GO" id="Q99706">
    <property type="GO annotations" value="1 GO annotation based on evolutionary models"/>
</dbReference>
<dbReference type="TreeFam" id="TF352669"/>
<dbReference type="PathwayCommons" id="Q99706"/>
<dbReference type="Reactome" id="R-HSA-198933">
    <property type="pathway name" value="Immunoregulatory interactions between a Lymphoid and a non-Lymphoid cell"/>
</dbReference>
<dbReference type="SignaLink" id="Q99706"/>
<dbReference type="SIGNOR" id="Q99706"/>
<dbReference type="BioGRID-ORCS" id="3805">
    <property type="hits" value="7 hits in 1133 CRISPR screens"/>
</dbReference>
<dbReference type="EvolutionaryTrace" id="Q99706"/>
<dbReference type="GeneWiki" id="KIR2DL4"/>
<dbReference type="GenomeRNAi" id="3805"/>
<dbReference type="Pharos" id="Q99706">
    <property type="development level" value="Tbio"/>
</dbReference>
<dbReference type="PRO" id="PR:Q99706"/>
<dbReference type="Proteomes" id="UP000005640">
    <property type="component" value="Chromosome 19"/>
</dbReference>
<dbReference type="RNAct" id="Q99706">
    <property type="molecule type" value="protein"/>
</dbReference>
<dbReference type="Bgee" id="ENSG00000189013">
    <property type="expression patterns" value="Expressed in male germ line stem cell (sensu Vertebrata) in testis and 79 other cell types or tissues"/>
</dbReference>
<dbReference type="ExpressionAtlas" id="Q99706">
    <property type="expression patterns" value="baseline and differential"/>
</dbReference>
<dbReference type="GO" id="GO:0031901">
    <property type="term" value="C:early endosome membrane"/>
    <property type="evidence" value="ECO:0000314"/>
    <property type="project" value="UniProtKB"/>
</dbReference>
<dbReference type="GO" id="GO:0016020">
    <property type="term" value="C:membrane"/>
    <property type="evidence" value="ECO:0007005"/>
    <property type="project" value="UniProtKB"/>
</dbReference>
<dbReference type="GO" id="GO:0005886">
    <property type="term" value="C:plasma membrane"/>
    <property type="evidence" value="ECO:0000318"/>
    <property type="project" value="GO_Central"/>
</dbReference>
<dbReference type="GO" id="GO:0032394">
    <property type="term" value="F:MHC class Ib receptor activity"/>
    <property type="evidence" value="ECO:0000314"/>
    <property type="project" value="UniProtKB"/>
</dbReference>
<dbReference type="GO" id="GO:0004888">
    <property type="term" value="F:transmembrane signaling receptor activity"/>
    <property type="evidence" value="ECO:0000304"/>
    <property type="project" value="ProtInc"/>
</dbReference>
<dbReference type="GO" id="GO:0006968">
    <property type="term" value="P:cellular defense response"/>
    <property type="evidence" value="ECO:0000304"/>
    <property type="project" value="ProtInc"/>
</dbReference>
<dbReference type="GO" id="GO:0002764">
    <property type="term" value="P:immune response-regulating signaling pathway"/>
    <property type="evidence" value="ECO:0000318"/>
    <property type="project" value="GO_Central"/>
</dbReference>
<dbReference type="GO" id="GO:0045953">
    <property type="term" value="P:negative regulation of natural killer cell mediated cytotoxicity"/>
    <property type="evidence" value="ECO:0000314"/>
    <property type="project" value="UniProtKB"/>
</dbReference>
<dbReference type="GO" id="GO:2000774">
    <property type="term" value="P:positive regulation of cellular senescence"/>
    <property type="evidence" value="ECO:0000314"/>
    <property type="project" value="UniProtKB"/>
</dbReference>
<dbReference type="GO" id="GO:0002729">
    <property type="term" value="P:positive regulation of natural killer cell cytokine production"/>
    <property type="evidence" value="ECO:0000314"/>
    <property type="project" value="UniProtKB"/>
</dbReference>
<dbReference type="GO" id="GO:0007165">
    <property type="term" value="P:signal transduction"/>
    <property type="evidence" value="ECO:0000304"/>
    <property type="project" value="ProtInc"/>
</dbReference>
<dbReference type="FunFam" id="2.60.40.10:FF:000033">
    <property type="entry name" value="Killer cell immunoglobulin-like receptor"/>
    <property type="match status" value="1"/>
</dbReference>
<dbReference type="FunFam" id="2.60.40.10:FF:000049">
    <property type="entry name" value="Leukocyte immunoglobulin-like receptor subfamily B member 1"/>
    <property type="match status" value="1"/>
</dbReference>
<dbReference type="Gene3D" id="2.60.40.10">
    <property type="entry name" value="Immunoglobulins"/>
    <property type="match status" value="2"/>
</dbReference>
<dbReference type="InterPro" id="IPR036179">
    <property type="entry name" value="Ig-like_dom_sf"/>
</dbReference>
<dbReference type="InterPro" id="IPR013783">
    <property type="entry name" value="Ig-like_fold"/>
</dbReference>
<dbReference type="InterPro" id="IPR050412">
    <property type="entry name" value="Ig-like_Receptors_ImmuneReg"/>
</dbReference>
<dbReference type="InterPro" id="IPR003599">
    <property type="entry name" value="Ig_sub"/>
</dbReference>
<dbReference type="InterPro" id="IPR013151">
    <property type="entry name" value="Immunoglobulin_dom"/>
</dbReference>
<dbReference type="PANTHER" id="PTHR11738:SF113">
    <property type="entry name" value="KILLER CELL IMMUNOGLOBULIN-LIKE RECEPTOR 2DL4"/>
    <property type="match status" value="1"/>
</dbReference>
<dbReference type="PANTHER" id="PTHR11738">
    <property type="entry name" value="MHC CLASS I NK CELL RECEPTOR"/>
    <property type="match status" value="1"/>
</dbReference>
<dbReference type="Pfam" id="PF00047">
    <property type="entry name" value="ig"/>
    <property type="match status" value="2"/>
</dbReference>
<dbReference type="SMART" id="SM00409">
    <property type="entry name" value="IG"/>
    <property type="match status" value="2"/>
</dbReference>
<dbReference type="SUPFAM" id="SSF48726">
    <property type="entry name" value="Immunoglobulin"/>
    <property type="match status" value="2"/>
</dbReference>
<feature type="signal peptide" evidence="1">
    <location>
        <begin position="1"/>
        <end position="21"/>
    </location>
</feature>
<feature type="chain" id="PRO_0000015081" description="Killer cell immunoglobulin-like receptor 2DL4">
    <location>
        <begin position="22"/>
        <end position="377"/>
    </location>
</feature>
<feature type="topological domain" description="Extracellular" evidence="2">
    <location>
        <begin position="22"/>
        <end position="242"/>
    </location>
</feature>
<feature type="transmembrane region" description="Helical" evidence="2">
    <location>
        <begin position="243"/>
        <end position="263"/>
    </location>
</feature>
<feature type="topological domain" description="Cytoplasmic" evidence="2">
    <location>
        <begin position="264"/>
        <end position="377"/>
    </location>
</feature>
<feature type="domain" description="Ig-like C2-type 1">
    <location>
        <begin position="44"/>
        <end position="104"/>
    </location>
</feature>
<feature type="domain" description="Ig-like C2-type 2">
    <location>
        <begin position="139"/>
        <end position="202"/>
    </location>
</feature>
<feature type="region of interest" description="Disordered" evidence="3">
    <location>
        <begin position="338"/>
        <end position="377"/>
    </location>
</feature>
<feature type="compositionally biased region" description="Polar residues" evidence="3">
    <location>
        <begin position="352"/>
        <end position="377"/>
    </location>
</feature>
<feature type="glycosylation site" description="N-linked (GlcNAc...) asparagine" evidence="2">
    <location>
        <position position="141"/>
    </location>
</feature>
<feature type="glycosylation site" description="N-linked (GlcNAc...) asparagine" evidence="2">
    <location>
        <position position="175"/>
    </location>
</feature>
<feature type="disulfide bond" evidence="1">
    <location>
        <begin position="51"/>
        <end position="97"/>
    </location>
</feature>
<feature type="disulfide bond" evidence="1">
    <location>
        <begin position="146"/>
        <end position="195"/>
    </location>
</feature>
<feature type="splice variant" id="VSP_002608" description="In isoform 6." evidence="22">
    <location>
        <begin position="27"/>
        <end position="121"/>
    </location>
</feature>
<feature type="splice variant" id="VSP_002609" description="In isoform 2, isoform 4, isoform 5 and isoform 6." evidence="20 21 22">
    <location>
        <begin position="219"/>
        <end position="235"/>
    </location>
</feature>
<feature type="splice variant" id="VSP_002610" description="In isoform 3, isoform 4, isoform 5 and isoform 6." evidence="21 22">
    <location>
        <begin position="236"/>
        <end position="270"/>
    </location>
</feature>
<feature type="splice variant" id="VSP_002611" description="In isoform 5." evidence="21">
    <location>
        <begin position="271"/>
        <end position="288"/>
    </location>
</feature>
<feature type="sequence variant" id="VAR_010307" description="In dbSNP:rs618835." evidence="6 15 17">
    <original>Y</original>
    <variation>C</variation>
    <location>
        <position position="53"/>
    </location>
</feature>
<feature type="sequence variant" id="VAR_010308" description="In dbSNP:rs773420112." evidence="12 13 14">
    <original>V</original>
    <variation>L</variation>
    <location>
        <position position="87"/>
    </location>
</feature>
<feature type="sequence variant" id="VAR_010309" description="In dbSNP:rs1051454." evidence="12 13 14 15 16">
    <original>A</original>
    <variation>T</variation>
    <location>
        <position position="138"/>
    </location>
</feature>
<feature type="sequence variant" id="VAR_010310" description="In dbSNP:rs1051456." evidence="12 13 14 15 16">
    <original>P</original>
    <variation>A</variation>
    <location>
        <position position="209"/>
    </location>
</feature>
<feature type="sequence variant" id="VAR_064649" description="In allele KIR2DL4*0501.">
    <original>DAA</original>
    <variation>MLL</variation>
    <location>
        <begin position="271"/>
        <end position="273"/>
    </location>
</feature>
<feature type="sequence variant" id="VAR_010311" evidence="14 15 16 17">
    <original>D</original>
    <variation>N</variation>
    <location>
        <position position="271"/>
    </location>
</feature>
<feature type="sequence variant" id="VAR_065101" description="In allele KIR2DL4*0501.">
    <location>
        <begin position="274"/>
        <end position="377"/>
    </location>
</feature>
<feature type="sequence variant" id="VAR_010312" description="In dbSNP:rs1185997484." evidence="12 13 14 15">
    <original>N</original>
    <variation>H</variation>
    <location>
        <position position="371"/>
    </location>
</feature>
<feature type="mutagenesis site" description="Does not affect targeting to the endosomal compartment." evidence="5">
    <original>RY</original>
    <variation>GT</variation>
    <location>
        <begin position="246"/>
        <end position="247"/>
    </location>
</feature>
<feature type="sequence conflict" description="In Ref. 5; ABW73961." evidence="23" ref="5">
    <original>V</original>
    <variation>A</variation>
    <location>
        <position position="47"/>
    </location>
</feature>
<feature type="sequence conflict" description="In Ref. 7; AAD24763." evidence="23" ref="7">
    <original>T</original>
    <variation>P</variation>
    <location>
        <position position="229"/>
    </location>
</feature>
<feature type="strand" evidence="25">
    <location>
        <begin position="32"/>
        <end position="37"/>
    </location>
</feature>
<feature type="strand" evidence="25">
    <location>
        <begin position="39"/>
        <end position="42"/>
    </location>
</feature>
<feature type="strand" evidence="25">
    <location>
        <begin position="47"/>
        <end position="52"/>
    </location>
</feature>
<feature type="strand" evidence="25">
    <location>
        <begin position="54"/>
        <end position="67"/>
    </location>
</feature>
<feature type="helix" evidence="25">
    <location>
        <begin position="71"/>
        <end position="73"/>
    </location>
</feature>
<feature type="strand" evidence="25">
    <location>
        <begin position="76"/>
        <end position="84"/>
    </location>
</feature>
<feature type="helix" evidence="25">
    <location>
        <begin position="89"/>
        <end position="91"/>
    </location>
</feature>
<feature type="strand" evidence="25">
    <location>
        <begin position="93"/>
        <end position="100"/>
    </location>
</feature>
<feature type="strand" evidence="25">
    <location>
        <begin position="102"/>
        <end position="104"/>
    </location>
</feature>
<feature type="strand" evidence="25">
    <location>
        <begin position="115"/>
        <end position="120"/>
    </location>
</feature>
<feature type="strand" evidence="25">
    <location>
        <begin position="127"/>
        <end position="132"/>
    </location>
</feature>
<feature type="strand" evidence="25">
    <location>
        <begin position="134"/>
        <end position="136"/>
    </location>
</feature>
<feature type="strand" evidence="25">
    <location>
        <begin position="141"/>
        <end position="150"/>
    </location>
</feature>
<feature type="strand" evidence="25">
    <location>
        <begin position="153"/>
        <end position="159"/>
    </location>
</feature>
<feature type="strand" evidence="25">
    <location>
        <begin position="162"/>
        <end position="169"/>
    </location>
</feature>
<feature type="strand" evidence="25">
    <location>
        <begin position="171"/>
        <end position="173"/>
    </location>
</feature>
<feature type="turn" evidence="25">
    <location>
        <begin position="174"/>
        <end position="176"/>
    </location>
</feature>
<feature type="strand" evidence="25">
    <location>
        <begin position="177"/>
        <end position="186"/>
    </location>
</feature>
<feature type="strand" evidence="25">
    <location>
        <begin position="191"/>
        <end position="198"/>
    </location>
</feature>
<feature type="strand" evidence="25">
    <location>
        <begin position="213"/>
        <end position="217"/>
    </location>
</feature>
<proteinExistence type="evidence at protein level"/>
<accession>Q99706</accession>
<accession>A8W795</accession>
<accession>O14621</accession>
<accession>O14622</accession>
<accession>O14623</accession>
<accession>O14624</accession>
<accession>O43534</accession>
<accession>P78400</accession>
<accession>P78401</accession>
<accession>Q8N738</accession>
<accession>Q99559</accession>
<accession>Q99560</accession>
<accession>Q99561</accession>
<accession>Q99562</accession>
<accession>Q9UQJ7</accession>
<organism>
    <name type="scientific">Homo sapiens</name>
    <name type="common">Human</name>
    <dbReference type="NCBI Taxonomy" id="9606"/>
    <lineage>
        <taxon>Eukaryota</taxon>
        <taxon>Metazoa</taxon>
        <taxon>Chordata</taxon>
        <taxon>Craniata</taxon>
        <taxon>Vertebrata</taxon>
        <taxon>Euteleostomi</taxon>
        <taxon>Mammalia</taxon>
        <taxon>Eutheria</taxon>
        <taxon>Euarchontoglires</taxon>
        <taxon>Primates</taxon>
        <taxon>Haplorrhini</taxon>
        <taxon>Catarrhini</taxon>
        <taxon>Hominidae</taxon>
        <taxon>Homo</taxon>
    </lineage>
</organism>
<reference key="1">
    <citation type="journal article" date="1996" name="Tissue Antigens">
        <title>NK cell receptor gene of the KIR family with two IG domains but highest homology to KIR receptors with three IG domains.</title>
        <authorList>
            <person name="Selvakumar A."/>
            <person name="Steffens U."/>
            <person name="Dupont B."/>
        </authorList>
    </citation>
    <scope>NUCLEOTIDE SEQUENCE [MRNA]</scope>
    <scope>VARIANTS LEU-87; THR-138; ALA-209 AND HIS-371</scope>
</reference>
<reference key="2">
    <citation type="journal article" date="1997" name="Immunity">
        <title>Functionally and structurally distinct NK cell receptor repertoires in the peripheral blood of two human donors.</title>
        <authorList>
            <person name="Valiante N.M."/>
            <person name="Uhrberg M."/>
            <person name="Shilling H.G."/>
            <person name="Lienert-Weidenbach K."/>
            <person name="Arnett K.L."/>
            <person name="D'Andrea A."/>
            <person name="Phillips J.H."/>
            <person name="Lanier L.L."/>
            <person name="Parham P."/>
        </authorList>
    </citation>
    <scope>NUCLEOTIDE SEQUENCE [MRNA]</scope>
    <scope>VARIANTS CYS-53; THR-138; ALA-209; ASN-271 AND HIS-371</scope>
</reference>
<reference key="3">
    <citation type="journal article" date="1997" name="Immunol. Rev.">
        <title>Polymorphism and domain variability of human killer cell inhibitory receptors.</title>
        <authorList>
            <person name="Selvakumar A."/>
            <person name="Steffens U."/>
            <person name="Dupont B."/>
        </authorList>
    </citation>
    <scope>NUCLEOTIDE SEQUENCE [MRNA] (ISOFORM 2)</scope>
    <scope>VARIANTS LEU-87; THR-138; ALA-209 AND HIS-371</scope>
</reference>
<reference key="4">
    <citation type="journal article" date="1997" name="Tissue Antigens">
        <title>Genomic organization and allelic polymorphism of the human killer cell inhibitory receptor gene KIR103.</title>
        <authorList>
            <person name="Selvakumar A."/>
            <person name="Steffens U."/>
            <person name="Palanisamy N."/>
            <person name="Chaganti R.S.K."/>
            <person name="Dupont B."/>
        </authorList>
    </citation>
    <scope>NUCLEOTIDE SEQUENCE [GENOMIC DNA / MRNA] (ISOFORMS 1; 3; 4 AND 5)</scope>
    <scope>VARIANTS LEU-87; THR-138; ALA-209; ASN-271 AND HIS-371</scope>
</reference>
<reference key="5">
    <citation type="journal article" date="2008" name="Mol. Immunol.">
        <title>The elucidation of KIR2DL4 gene polymorphism.</title>
        <authorList>
            <person name="Schellekens J."/>
            <person name="Tilanus M.G."/>
            <person name="Rozemuller E.H."/>
        </authorList>
    </citation>
    <scope>NUCLEOTIDE SEQUENCE [MRNA] (ALLELE KIR2DL4*0501)</scope>
    <scope>VARIANT CYS-53</scope>
</reference>
<reference key="6">
    <citation type="submission" date="1997-01" db="EMBL/GenBank/DDBJ databases">
        <authorList>
            <person name="Biassoni R."/>
        </authorList>
    </citation>
    <scope>NUCLEOTIDE SEQUENCE [MRNA] (ISOFORMS 1; 2 AND 6)</scope>
    <scope>VARIANTS THR-138; ALA-209 AND ASN-271</scope>
    <source>
        <tissue>Lymphoid tissue</tissue>
    </source>
</reference>
<reference key="7">
    <citation type="submission" date="1998-12" db="EMBL/GenBank/DDBJ databases">
        <title>Exon deletion contributes to structural diversity of 2DL4 killer inhibitory receptors.</title>
        <authorList>
            <person name="Chan H.W."/>
            <person name="Salter R.D."/>
        </authorList>
    </citation>
    <scope>NUCLEOTIDE SEQUENCE [GENOMIC DNA]</scope>
    <scope>VARIANTS CYS-53 AND ASN-271</scope>
</reference>
<reference key="8">
    <citation type="journal article" date="2004" name="Nature">
        <title>The DNA sequence and biology of human chromosome 19.</title>
        <authorList>
            <person name="Grimwood J."/>
            <person name="Gordon L.A."/>
            <person name="Olsen A.S."/>
            <person name="Terry A."/>
            <person name="Schmutz J."/>
            <person name="Lamerdin J.E."/>
            <person name="Hellsten U."/>
            <person name="Goodstein D."/>
            <person name="Couronne O."/>
            <person name="Tran-Gyamfi M."/>
            <person name="Aerts A."/>
            <person name="Altherr M."/>
            <person name="Ashworth L."/>
            <person name="Bajorek E."/>
            <person name="Black S."/>
            <person name="Branscomb E."/>
            <person name="Caenepeel S."/>
            <person name="Carrano A.V."/>
            <person name="Caoile C."/>
            <person name="Chan Y.M."/>
            <person name="Christensen M."/>
            <person name="Cleland C.A."/>
            <person name="Copeland A."/>
            <person name="Dalin E."/>
            <person name="Dehal P."/>
            <person name="Denys M."/>
            <person name="Detter J.C."/>
            <person name="Escobar J."/>
            <person name="Flowers D."/>
            <person name="Fotopulos D."/>
            <person name="Garcia C."/>
            <person name="Georgescu A.M."/>
            <person name="Glavina T."/>
            <person name="Gomez M."/>
            <person name="Gonzales E."/>
            <person name="Groza M."/>
            <person name="Hammon N."/>
            <person name="Hawkins T."/>
            <person name="Haydu L."/>
            <person name="Ho I."/>
            <person name="Huang W."/>
            <person name="Israni S."/>
            <person name="Jett J."/>
            <person name="Kadner K."/>
            <person name="Kimball H."/>
            <person name="Kobayashi A."/>
            <person name="Larionov V."/>
            <person name="Leem S.-H."/>
            <person name="Lopez F."/>
            <person name="Lou Y."/>
            <person name="Lowry S."/>
            <person name="Malfatti S."/>
            <person name="Martinez D."/>
            <person name="McCready P.M."/>
            <person name="Medina C."/>
            <person name="Morgan J."/>
            <person name="Nelson K."/>
            <person name="Nolan M."/>
            <person name="Ovcharenko I."/>
            <person name="Pitluck S."/>
            <person name="Pollard M."/>
            <person name="Popkie A.P."/>
            <person name="Predki P."/>
            <person name="Quan G."/>
            <person name="Ramirez L."/>
            <person name="Rash S."/>
            <person name="Retterer J."/>
            <person name="Rodriguez A."/>
            <person name="Rogers S."/>
            <person name="Salamov A."/>
            <person name="Salazar A."/>
            <person name="She X."/>
            <person name="Smith D."/>
            <person name="Slezak T."/>
            <person name="Solovyev V."/>
            <person name="Thayer N."/>
            <person name="Tice H."/>
            <person name="Tsai M."/>
            <person name="Ustaszewska A."/>
            <person name="Vo N."/>
            <person name="Wagner M."/>
            <person name="Wheeler J."/>
            <person name="Wu K."/>
            <person name="Xie G."/>
            <person name="Yang J."/>
            <person name="Dubchak I."/>
            <person name="Furey T.S."/>
            <person name="DeJong P."/>
            <person name="Dickson M."/>
            <person name="Gordon D."/>
            <person name="Eichler E.E."/>
            <person name="Pennacchio L.A."/>
            <person name="Richardson P."/>
            <person name="Stubbs L."/>
            <person name="Rokhsar D.S."/>
            <person name="Myers R.M."/>
            <person name="Rubin E.M."/>
            <person name="Lucas S.M."/>
        </authorList>
    </citation>
    <scope>NUCLEOTIDE SEQUENCE [LARGE SCALE GENOMIC DNA]</scope>
</reference>
<reference key="9">
    <citation type="journal article" date="1999" name="J. Exp. Med.">
        <title>A human histocompatibility leukocyte antigen (HLA)-G-specific receptor expressed on all natural killer cells.</title>
        <authorList>
            <person name="Rajagopalan S."/>
            <person name="Long E.O."/>
        </authorList>
    </citation>
    <scope>FUNCTION</scope>
    <scope>SUBUNIT</scope>
    <scope>INTERACTION WITH HLA-G</scope>
</reference>
<reference key="10">
    <citation type="journal article" date="2006" name="PLoS Biol.">
        <title>Activation of NK cells by an endocytosed receptor for soluble HLA-G.</title>
        <authorList>
            <person name="Rajagopalan S."/>
            <person name="Bryceson Y.T."/>
            <person name="Kuppusamy S.P."/>
            <person name="Geraghty D.E."/>
            <person name="van der Meer A."/>
            <person name="Joosten I."/>
            <person name="Long E.O."/>
        </authorList>
    </citation>
    <scope>FUNCTION</scope>
    <scope>SUBCELLULAR LOCATION</scope>
    <scope>SUBUNIT</scope>
    <scope>INTERACTION WITH HLA-G</scope>
    <scope>MUTAGENESIS OF 246-ARG-TYR-247</scope>
</reference>
<reference key="11">
    <citation type="journal article" date="2008" name="Nat. Immunol.">
        <title>An essential function for beta-arrestin 2 in the inhibitory signaling of natural killer cells.</title>
        <authorList>
            <person name="Yu M.-C."/>
            <person name="Su L.-L."/>
            <person name="Zou L."/>
            <person name="Liu Y."/>
            <person name="Wu N."/>
            <person name="Kong L."/>
            <person name="Zhuang Z.-H."/>
            <person name="Sun L."/>
            <person name="Liu H.P."/>
            <person name="Hu J.-H."/>
            <person name="Li D."/>
            <person name="Strominger J.L."/>
            <person name="Zang J.-W."/>
            <person name="Pei G."/>
            <person name="Ge B.-X."/>
        </authorList>
    </citation>
    <scope>INTERACTION WITH ARRB2</scope>
</reference>
<reference key="12">
    <citation type="journal article" date="2009" name="Proc. Natl. Acad. Sci. U.S.A.">
        <title>HLA-G homodimer-induced cytokine secretion through HLA-G receptors on human decidual macrophages and natural killer cells.</title>
        <authorList>
            <person name="Li C."/>
            <person name="Houser B.L."/>
            <person name="Nicotra M.L."/>
            <person name="Strominger J.L."/>
        </authorList>
    </citation>
    <scope>TISSUE SPECIFICITY</scope>
</reference>
<reference key="13">
    <citation type="journal article" date="2010" name="Sci. Signal.">
        <title>DNA-PKcs controls an endosomal signaling pathway for a proinflammatory response by natural killer cells.</title>
        <authorList>
            <person name="Rajagopalan S."/>
            <person name="Moyle M.W."/>
            <person name="Joosten I."/>
            <person name="Long E.O."/>
        </authorList>
    </citation>
    <scope>FUNCTION</scope>
</reference>
<reference key="14">
    <citation type="journal article" date="2012" name="Proc. Natl. Acad. Sci. U.S.A.">
        <title>Cellular senescence induced by CD158d reprograms natural killer cells to promote vascular remodeling.</title>
        <authorList>
            <person name="Rajagopalan S."/>
            <person name="Long E.O."/>
        </authorList>
    </citation>
    <scope>FUNCTION</scope>
</reference>
<reference key="15">
    <citation type="journal article" date="2017" name="Immunity">
        <title>Natural Killer Cells Promote Fetal Development through the Secretion of Growth-Promoting Factors.</title>
        <authorList>
            <person name="Fu B."/>
            <person name="Zhou Y."/>
            <person name="Ni X."/>
            <person name="Tong X."/>
            <person name="Xu X."/>
            <person name="Dong Z."/>
            <person name="Sun R."/>
            <person name="Tian Z."/>
            <person name="Wei H."/>
        </authorList>
    </citation>
    <scope>FUNCTION</scope>
    <scope>TISSUE SPECIFICITY</scope>
</reference>
<gene>
    <name evidence="18 19 24" type="primary">KIR2DL4</name>
    <name type="synonym">CD158D</name>
    <name type="synonym">KIR103AS</name>
</gene>
<keyword id="KW-0002">3D-structure</keyword>
<keyword id="KW-0025">Alternative splicing</keyword>
<keyword id="KW-1003">Cell membrane</keyword>
<keyword id="KW-1015">Disulfide bond</keyword>
<keyword id="KW-0967">Endosome</keyword>
<keyword id="KW-0325">Glycoprotein</keyword>
<keyword id="KW-0393">Immunoglobulin domain</keyword>
<keyword id="KW-0472">Membrane</keyword>
<keyword id="KW-1267">Proteomics identification</keyword>
<keyword id="KW-0675">Receptor</keyword>
<keyword id="KW-1185">Reference proteome</keyword>
<keyword id="KW-0677">Repeat</keyword>
<keyword id="KW-0732">Signal</keyword>
<keyword id="KW-0812">Transmembrane</keyword>
<keyword id="KW-1133">Transmembrane helix</keyword>
<sequence length="377" mass="41487">MSMSPTVIILACLGFFLDQSVWAHVGGQDKPFCSAWPSAVVPQGGHVTLRCHYRRGFNIFTLYKKDGVPVPELYNRIFWNSFLISPVTPAHAGTYRCRGFHPHSPTEWSAPSNPLVIMVTGLYEKPSLTARPGPTVRAGENVTLSCSSQSSFDIYHLSREGEAHELRLPAVPSINGTFQADFPLGPATHGETYRCFGSFHGSPYEWSDPSDPLPVSVTGNPSSSWPSPTEPSFKTGIARHLHAVIRYSVAIILFTILPFFLLHRWCSKKKDAAVMNQEPAGHRTVNREDSDEQDPQEVTYAQLDHCIFTQRKITGPSQRSKRPSTDTSVCIELPNAEPRALSPAHEHHSQALMGSSRETTALSQTQLASSNVPAAGI</sequence>
<protein>
    <recommendedName>
        <fullName>Killer cell immunoglobulin-like receptor 2DL4</fullName>
    </recommendedName>
    <alternativeName>
        <fullName>CD158 antigen-like family member D</fullName>
    </alternativeName>
    <alternativeName>
        <fullName>G9P</fullName>
    </alternativeName>
    <alternativeName>
        <fullName>Killer cell inhibitory receptor 103AS</fullName>
        <shortName>KIR-103AS</shortName>
    </alternativeName>
    <alternativeName>
        <fullName>MHC class I NK cell receptor KIR103AS</fullName>
    </alternativeName>
    <cdAntigenName evidence="19">CD158d</cdAntigenName>
</protein>
<name>KI2L4_HUMAN</name>
<comment type="function">
    <text evidence="4 5 9 10 11">Receptor for non-classical major histocompatibility class Ib HLA-G molecules. Recognizes HLA-G in complex with B2M/beta-2 microglobulin and a nonamer self-peptide (peptide-bound HLA-G-B2M). In decidual NK cells, binds peptide-bound HLA-G-B2M complex and triggers NK cell senescence-associated secretory phenotype as a molecular switch to promote vascular remodeling and fetal growth in early pregnancy (PubMed:16366734, PubMed:23184984, PubMed:29262349). May play a role in balancing tolerance and antiviral-immunity at maternal-fetal interface by keeping in check the effector functions of NK, CD8+ T cells and B cells (PubMed:10190900, PubMed:16366734). Upon interaction with peptide-bound HLA-G-B2M, initiates signaling from the endosomal compartment leading to downstream activation of PRKDC-XRCC5 and AKT1, and ultimately triggering NF-kappa-B-dependent pro-inflammatory response (PubMed:20179272).</text>
</comment>
<comment type="subunit">
    <text evidence="4 5 7">Interacts with peptide-bound HLA-G-B2M heterotrimeric complex (PubMed:10190900, PubMed:16366734). Interacts with ARRB2 (PubMed:18604210).</text>
</comment>
<comment type="interaction">
    <interactant intactId="EBI-10294579">
        <id>Q99706</id>
    </interactant>
    <interactant intactId="EBI-953896">
        <id>Q9NP55</id>
        <label>BPIFA1</label>
    </interactant>
    <organismsDiffer>false</organismsDiffer>
    <experiments>3</experiments>
</comment>
<comment type="interaction">
    <interactant intactId="EBI-10294579">
        <id>Q99706</id>
    </interactant>
    <interactant intactId="EBI-2833956">
        <id>P08637</id>
        <label>FCGR3A</label>
    </interactant>
    <organismsDiffer>false</organismsDiffer>
    <experiments>2</experiments>
</comment>
<comment type="interaction">
    <interactant intactId="EBI-10294579">
        <id>Q99706</id>
    </interactant>
    <interactant intactId="EBI-750641">
        <id>Q5TD97</id>
        <label>FHL5</label>
    </interactant>
    <organismsDiffer>false</organismsDiffer>
    <experiments>3</experiments>
</comment>
<comment type="interaction">
    <interactant intactId="EBI-10294579">
        <id>Q99706</id>
    </interactant>
    <interactant intactId="EBI-6509505">
        <id>Q0VD86</id>
        <label>INCA1</label>
    </interactant>
    <organismsDiffer>false</organismsDiffer>
    <experiments>3</experiments>
</comment>
<comment type="interaction">
    <interactant intactId="EBI-10294579">
        <id>Q99706</id>
    </interactant>
    <interactant intactId="EBI-740322">
        <id>Q93062</id>
        <label>RBPMS</label>
    </interactant>
    <organismsDiffer>false</organismsDiffer>
    <experiments>3</experiments>
</comment>
<comment type="interaction">
    <interactant intactId="EBI-10294579">
        <id>Q99706</id>
    </interactant>
    <interactant intactId="EBI-6268651">
        <id>Q9NPL8</id>
        <label>TIMMDC1</label>
    </interactant>
    <organismsDiffer>false</organismsDiffer>
    <experiments>3</experiments>
</comment>
<comment type="interaction">
    <interactant intactId="EBI-10294579">
        <id>Q99706</id>
    </interactant>
    <interactant intactId="EBI-742327">
        <id>Q15654</id>
        <label>TRIP6</label>
    </interactant>
    <organismsDiffer>false</organismsDiffer>
    <experiments>3</experiments>
</comment>
<comment type="subcellular location">
    <subcellularLocation>
        <location>Cell membrane</location>
        <topology>Single-pass type I membrane protein</topology>
    </subcellularLocation>
    <subcellularLocation>
        <location evidence="5">Early endosome membrane</location>
    </subcellularLocation>
</comment>
<comment type="alternative products">
    <event type="alternative splicing"/>
    <isoform>
        <id>Q99706-1</id>
        <name>1</name>
        <sequence type="displayed"/>
    </isoform>
    <isoform>
        <id>Q99706-2</id>
        <name>2</name>
        <name>AST</name>
        <sequence type="described" ref="VSP_002609"/>
    </isoform>
    <isoform>
        <id>Q99706-3</id>
        <name>3</name>
        <name>AS</name>
        <sequence type="described" ref="VSP_002610"/>
    </isoform>
    <isoform>
        <id>Q99706-4</id>
        <name>4</name>
        <name>ASD1</name>
        <sequence type="described" ref="VSP_002609 VSP_002610"/>
    </isoform>
    <isoform>
        <id>Q99706-5</id>
        <name>5</name>
        <name>ASD2</name>
        <sequence type="described" ref="VSP_002609 VSP_002610 VSP_002611"/>
    </isoform>
    <isoform>
        <id>Q99706-6</id>
        <name>6</name>
        <sequence type="described" ref="VSP_002608 VSP_002609 VSP_002610"/>
    </isoform>
</comment>
<comment type="tissue specificity">
    <text evidence="8 11">Expressed in decidual NK cells and innate lymphoid cell type I (ILC1) (PubMed:29262349). Expressed in a subset of peripheral NK cells (PubMed:19304799).</text>
</comment>
<comment type="similarity">
    <text evidence="23">Belongs to the immunoglobulin superfamily.</text>
</comment>